<evidence type="ECO:0000255" key="1">
    <source>
        <dbReference type="HAMAP-Rule" id="MF_01152"/>
    </source>
</evidence>
<comment type="function">
    <text evidence="1">Participates actively in the response to hyperosmotic and heat shock by preventing the aggregation of stress-denatured proteins and by disaggregating proteins, also in an autonomous, DnaK-independent fashion. Unfolded proteins bind initially to DnaJ; upon interaction with the DnaJ-bound protein, DnaK hydrolyzes its bound ATP, resulting in the formation of a stable complex. GrpE releases ADP from DnaK; ATP binding to DnaK triggers the release of the substrate protein, thus completing the reaction cycle. Several rounds of ATP-dependent interactions between DnaJ, DnaK and GrpE are required for fully efficient folding. Also involved, together with DnaK and GrpE, in the DNA replication of plasmids through activation of initiation proteins.</text>
</comment>
<comment type="cofactor">
    <cofactor evidence="1">
        <name>Zn(2+)</name>
        <dbReference type="ChEBI" id="CHEBI:29105"/>
    </cofactor>
    <text evidence="1">Binds 2 Zn(2+) ions per monomer.</text>
</comment>
<comment type="subunit">
    <text evidence="1">Homodimer.</text>
</comment>
<comment type="subcellular location">
    <subcellularLocation>
        <location evidence="1">Cytoplasm</location>
    </subcellularLocation>
</comment>
<comment type="domain">
    <text evidence="1">The J domain is necessary and sufficient to stimulate DnaK ATPase activity. Zinc center 1 plays an important role in the autonomous, DnaK-independent chaperone activity of DnaJ. Zinc center 2 is essential for interaction with DnaK and for DnaJ activity.</text>
</comment>
<comment type="similarity">
    <text evidence="1">Belongs to the DnaJ family.</text>
</comment>
<reference key="1">
    <citation type="submission" date="2008-12" db="EMBL/GenBank/DDBJ databases">
        <title>Complete sequence of chromosome of Shewanella baltica OS223.</title>
        <authorList>
            <consortium name="US DOE Joint Genome Institute"/>
            <person name="Lucas S."/>
            <person name="Copeland A."/>
            <person name="Lapidus A."/>
            <person name="Glavina del Rio T."/>
            <person name="Dalin E."/>
            <person name="Tice H."/>
            <person name="Bruce D."/>
            <person name="Goodwin L."/>
            <person name="Pitluck S."/>
            <person name="Chertkov O."/>
            <person name="Meincke L."/>
            <person name="Brettin T."/>
            <person name="Detter J.C."/>
            <person name="Han C."/>
            <person name="Kuske C.R."/>
            <person name="Larimer F."/>
            <person name="Land M."/>
            <person name="Hauser L."/>
            <person name="Kyrpides N."/>
            <person name="Ovchinnikova G."/>
            <person name="Brettar I."/>
            <person name="Rodrigues J."/>
            <person name="Konstantinidis K."/>
            <person name="Tiedje J."/>
        </authorList>
    </citation>
    <scope>NUCLEOTIDE SEQUENCE [LARGE SCALE GENOMIC DNA]</scope>
    <source>
        <strain>OS223</strain>
    </source>
</reference>
<protein>
    <recommendedName>
        <fullName evidence="1">Chaperone protein DnaJ</fullName>
    </recommendedName>
</protein>
<proteinExistence type="inferred from homology"/>
<keyword id="KW-0143">Chaperone</keyword>
<keyword id="KW-0963">Cytoplasm</keyword>
<keyword id="KW-0235">DNA replication</keyword>
<keyword id="KW-0479">Metal-binding</keyword>
<keyword id="KW-0677">Repeat</keyword>
<keyword id="KW-0346">Stress response</keyword>
<keyword id="KW-0862">Zinc</keyword>
<keyword id="KW-0863">Zinc-finger</keyword>
<gene>
    <name evidence="1" type="primary">dnaJ</name>
    <name type="ordered locus">Sbal223_1043</name>
</gene>
<name>DNAJ_SHEB2</name>
<sequence length="377" mass="40865">MSKRDYYEVLGVSRDTSEREIKKAYKRLAMKFHPDRNPGDKTAEANFKEIKEAYEILTDADKKAAYDQFGHAGVDPNRGGGGYGGGQGDFGDIFGDVFGDIFGGGRRGGQRQAARGSDLRYNLELSLEEAVKGLTKELRIPTLATCDLCEGSGAKKGTSATTCGTCHGQGQVQMRQGFFAVQQPCPTCHGRGKIIKDPCTKCHGDGRVEKSKTLSVKIPAGVDTGDRIRLAGEGEAGEFGAPAGDLYVQVSVREHAIFVRDGNNLYCEVPISFSKAALGGEIEVPTLDGKVSLKIPAETQTGRMFRLRGKGVKSVRSHAVGDLLCKVVMETPVNLNDRQKELLREFEATLTGESKKHSPKAEGFFDGVKKFFQDLNS</sequence>
<organism>
    <name type="scientific">Shewanella baltica (strain OS223)</name>
    <dbReference type="NCBI Taxonomy" id="407976"/>
    <lineage>
        <taxon>Bacteria</taxon>
        <taxon>Pseudomonadati</taxon>
        <taxon>Pseudomonadota</taxon>
        <taxon>Gammaproteobacteria</taxon>
        <taxon>Alteromonadales</taxon>
        <taxon>Shewanellaceae</taxon>
        <taxon>Shewanella</taxon>
    </lineage>
</organism>
<accession>B8E4S2</accession>
<feature type="chain" id="PRO_1000164278" description="Chaperone protein DnaJ">
    <location>
        <begin position="1"/>
        <end position="377"/>
    </location>
</feature>
<feature type="domain" description="J" evidence="1">
    <location>
        <begin position="5"/>
        <end position="70"/>
    </location>
</feature>
<feature type="repeat" description="CXXCXGXG motif">
    <location>
        <begin position="146"/>
        <end position="153"/>
    </location>
</feature>
<feature type="repeat" description="CXXCXGXG motif">
    <location>
        <begin position="163"/>
        <end position="170"/>
    </location>
</feature>
<feature type="repeat" description="CXXCXGXG motif">
    <location>
        <begin position="185"/>
        <end position="192"/>
    </location>
</feature>
<feature type="repeat" description="CXXCXGXG motif">
    <location>
        <begin position="199"/>
        <end position="206"/>
    </location>
</feature>
<feature type="zinc finger region" description="CR-type" evidence="1">
    <location>
        <begin position="133"/>
        <end position="211"/>
    </location>
</feature>
<feature type="binding site" evidence="1">
    <location>
        <position position="146"/>
    </location>
    <ligand>
        <name>Zn(2+)</name>
        <dbReference type="ChEBI" id="CHEBI:29105"/>
        <label>1</label>
    </ligand>
</feature>
<feature type="binding site" evidence="1">
    <location>
        <position position="149"/>
    </location>
    <ligand>
        <name>Zn(2+)</name>
        <dbReference type="ChEBI" id="CHEBI:29105"/>
        <label>1</label>
    </ligand>
</feature>
<feature type="binding site" evidence="1">
    <location>
        <position position="163"/>
    </location>
    <ligand>
        <name>Zn(2+)</name>
        <dbReference type="ChEBI" id="CHEBI:29105"/>
        <label>2</label>
    </ligand>
</feature>
<feature type="binding site" evidence="1">
    <location>
        <position position="166"/>
    </location>
    <ligand>
        <name>Zn(2+)</name>
        <dbReference type="ChEBI" id="CHEBI:29105"/>
        <label>2</label>
    </ligand>
</feature>
<feature type="binding site" evidence="1">
    <location>
        <position position="185"/>
    </location>
    <ligand>
        <name>Zn(2+)</name>
        <dbReference type="ChEBI" id="CHEBI:29105"/>
        <label>2</label>
    </ligand>
</feature>
<feature type="binding site" evidence="1">
    <location>
        <position position="188"/>
    </location>
    <ligand>
        <name>Zn(2+)</name>
        <dbReference type="ChEBI" id="CHEBI:29105"/>
        <label>2</label>
    </ligand>
</feature>
<feature type="binding site" evidence="1">
    <location>
        <position position="199"/>
    </location>
    <ligand>
        <name>Zn(2+)</name>
        <dbReference type="ChEBI" id="CHEBI:29105"/>
        <label>1</label>
    </ligand>
</feature>
<feature type="binding site" evidence="1">
    <location>
        <position position="202"/>
    </location>
    <ligand>
        <name>Zn(2+)</name>
        <dbReference type="ChEBI" id="CHEBI:29105"/>
        <label>1</label>
    </ligand>
</feature>
<dbReference type="EMBL" id="CP001252">
    <property type="protein sequence ID" value="ACK45558.1"/>
    <property type="molecule type" value="Genomic_DNA"/>
</dbReference>
<dbReference type="RefSeq" id="WP_006082793.1">
    <property type="nucleotide sequence ID" value="NC_011663.1"/>
</dbReference>
<dbReference type="SMR" id="B8E4S2"/>
<dbReference type="KEGG" id="sbp:Sbal223_1043"/>
<dbReference type="HOGENOM" id="CLU_017633_0_7_6"/>
<dbReference type="Proteomes" id="UP000002507">
    <property type="component" value="Chromosome"/>
</dbReference>
<dbReference type="GO" id="GO:0005737">
    <property type="term" value="C:cytoplasm"/>
    <property type="evidence" value="ECO:0007669"/>
    <property type="project" value="UniProtKB-SubCell"/>
</dbReference>
<dbReference type="GO" id="GO:0005524">
    <property type="term" value="F:ATP binding"/>
    <property type="evidence" value="ECO:0007669"/>
    <property type="project" value="InterPro"/>
</dbReference>
<dbReference type="GO" id="GO:0031072">
    <property type="term" value="F:heat shock protein binding"/>
    <property type="evidence" value="ECO:0007669"/>
    <property type="project" value="InterPro"/>
</dbReference>
<dbReference type="GO" id="GO:0051082">
    <property type="term" value="F:unfolded protein binding"/>
    <property type="evidence" value="ECO:0007669"/>
    <property type="project" value="UniProtKB-UniRule"/>
</dbReference>
<dbReference type="GO" id="GO:0008270">
    <property type="term" value="F:zinc ion binding"/>
    <property type="evidence" value="ECO:0007669"/>
    <property type="project" value="UniProtKB-UniRule"/>
</dbReference>
<dbReference type="GO" id="GO:0051085">
    <property type="term" value="P:chaperone cofactor-dependent protein refolding"/>
    <property type="evidence" value="ECO:0007669"/>
    <property type="project" value="TreeGrafter"/>
</dbReference>
<dbReference type="GO" id="GO:0006260">
    <property type="term" value="P:DNA replication"/>
    <property type="evidence" value="ECO:0007669"/>
    <property type="project" value="UniProtKB-KW"/>
</dbReference>
<dbReference type="GO" id="GO:0042026">
    <property type="term" value="P:protein refolding"/>
    <property type="evidence" value="ECO:0007669"/>
    <property type="project" value="TreeGrafter"/>
</dbReference>
<dbReference type="GO" id="GO:0009408">
    <property type="term" value="P:response to heat"/>
    <property type="evidence" value="ECO:0007669"/>
    <property type="project" value="InterPro"/>
</dbReference>
<dbReference type="CDD" id="cd06257">
    <property type="entry name" value="DnaJ"/>
    <property type="match status" value="1"/>
</dbReference>
<dbReference type="CDD" id="cd10747">
    <property type="entry name" value="DnaJ_C"/>
    <property type="match status" value="1"/>
</dbReference>
<dbReference type="CDD" id="cd10719">
    <property type="entry name" value="DnaJ_zf"/>
    <property type="match status" value="1"/>
</dbReference>
<dbReference type="FunFam" id="1.10.287.110:FF:000003">
    <property type="entry name" value="Molecular chaperone DnaJ"/>
    <property type="match status" value="1"/>
</dbReference>
<dbReference type="FunFam" id="2.10.230.10:FF:000002">
    <property type="entry name" value="Molecular chaperone DnaJ"/>
    <property type="match status" value="1"/>
</dbReference>
<dbReference type="FunFam" id="2.60.260.20:FF:000004">
    <property type="entry name" value="Molecular chaperone DnaJ"/>
    <property type="match status" value="1"/>
</dbReference>
<dbReference type="Gene3D" id="1.10.287.110">
    <property type="entry name" value="DnaJ domain"/>
    <property type="match status" value="1"/>
</dbReference>
<dbReference type="Gene3D" id="2.10.230.10">
    <property type="entry name" value="Heat shock protein DnaJ, cysteine-rich domain"/>
    <property type="match status" value="1"/>
</dbReference>
<dbReference type="Gene3D" id="2.60.260.20">
    <property type="entry name" value="Urease metallochaperone UreE, N-terminal domain"/>
    <property type="match status" value="2"/>
</dbReference>
<dbReference type="HAMAP" id="MF_01152">
    <property type="entry name" value="DnaJ"/>
    <property type="match status" value="1"/>
</dbReference>
<dbReference type="InterPro" id="IPR012724">
    <property type="entry name" value="DnaJ"/>
</dbReference>
<dbReference type="InterPro" id="IPR002939">
    <property type="entry name" value="DnaJ_C"/>
</dbReference>
<dbReference type="InterPro" id="IPR001623">
    <property type="entry name" value="DnaJ_domain"/>
</dbReference>
<dbReference type="InterPro" id="IPR018253">
    <property type="entry name" value="DnaJ_domain_CS"/>
</dbReference>
<dbReference type="InterPro" id="IPR008971">
    <property type="entry name" value="HSP40/DnaJ_pept-bd"/>
</dbReference>
<dbReference type="InterPro" id="IPR001305">
    <property type="entry name" value="HSP_DnaJ_Cys-rich_dom"/>
</dbReference>
<dbReference type="InterPro" id="IPR036410">
    <property type="entry name" value="HSP_DnaJ_Cys-rich_dom_sf"/>
</dbReference>
<dbReference type="InterPro" id="IPR036869">
    <property type="entry name" value="J_dom_sf"/>
</dbReference>
<dbReference type="NCBIfam" id="TIGR02349">
    <property type="entry name" value="DnaJ_bact"/>
    <property type="match status" value="1"/>
</dbReference>
<dbReference type="NCBIfam" id="NF008035">
    <property type="entry name" value="PRK10767.1"/>
    <property type="match status" value="1"/>
</dbReference>
<dbReference type="PANTHER" id="PTHR43096:SF48">
    <property type="entry name" value="CHAPERONE PROTEIN DNAJ"/>
    <property type="match status" value="1"/>
</dbReference>
<dbReference type="PANTHER" id="PTHR43096">
    <property type="entry name" value="DNAJ HOMOLOG 1, MITOCHONDRIAL-RELATED"/>
    <property type="match status" value="1"/>
</dbReference>
<dbReference type="Pfam" id="PF00226">
    <property type="entry name" value="DnaJ"/>
    <property type="match status" value="1"/>
</dbReference>
<dbReference type="Pfam" id="PF01556">
    <property type="entry name" value="DnaJ_C"/>
    <property type="match status" value="1"/>
</dbReference>
<dbReference type="Pfam" id="PF00684">
    <property type="entry name" value="DnaJ_CXXCXGXG"/>
    <property type="match status" value="1"/>
</dbReference>
<dbReference type="PRINTS" id="PR00625">
    <property type="entry name" value="JDOMAIN"/>
</dbReference>
<dbReference type="SMART" id="SM00271">
    <property type="entry name" value="DnaJ"/>
    <property type="match status" value="1"/>
</dbReference>
<dbReference type="SUPFAM" id="SSF46565">
    <property type="entry name" value="Chaperone J-domain"/>
    <property type="match status" value="1"/>
</dbReference>
<dbReference type="SUPFAM" id="SSF57938">
    <property type="entry name" value="DnaJ/Hsp40 cysteine-rich domain"/>
    <property type="match status" value="1"/>
</dbReference>
<dbReference type="SUPFAM" id="SSF49493">
    <property type="entry name" value="HSP40/DnaJ peptide-binding domain"/>
    <property type="match status" value="2"/>
</dbReference>
<dbReference type="PROSITE" id="PS00636">
    <property type="entry name" value="DNAJ_1"/>
    <property type="match status" value="1"/>
</dbReference>
<dbReference type="PROSITE" id="PS50076">
    <property type="entry name" value="DNAJ_2"/>
    <property type="match status" value="1"/>
</dbReference>
<dbReference type="PROSITE" id="PS51188">
    <property type="entry name" value="ZF_CR"/>
    <property type="match status" value="1"/>
</dbReference>